<organism>
    <name type="scientific">Shigella sonnei (strain Ss046)</name>
    <dbReference type="NCBI Taxonomy" id="300269"/>
    <lineage>
        <taxon>Bacteria</taxon>
        <taxon>Pseudomonadati</taxon>
        <taxon>Pseudomonadota</taxon>
        <taxon>Gammaproteobacteria</taxon>
        <taxon>Enterobacterales</taxon>
        <taxon>Enterobacteriaceae</taxon>
        <taxon>Shigella</taxon>
    </lineage>
</organism>
<accession>Q3Z1D9</accession>
<feature type="chain" id="PRO_0000245972" description="FMN-dependent NADH:quinone oxidoreductase">
    <location>
        <begin position="1"/>
        <end position="201"/>
    </location>
</feature>
<feature type="binding site" evidence="1">
    <location>
        <position position="10"/>
    </location>
    <ligand>
        <name>FMN</name>
        <dbReference type="ChEBI" id="CHEBI:58210"/>
    </ligand>
</feature>
<feature type="binding site" evidence="1">
    <location>
        <begin position="16"/>
        <end position="18"/>
    </location>
    <ligand>
        <name>FMN</name>
        <dbReference type="ChEBI" id="CHEBI:58210"/>
    </ligand>
</feature>
<feature type="binding site" evidence="1">
    <location>
        <begin position="96"/>
        <end position="99"/>
    </location>
    <ligand>
        <name>FMN</name>
        <dbReference type="ChEBI" id="CHEBI:58210"/>
    </ligand>
</feature>
<feature type="binding site" evidence="1">
    <location>
        <begin position="140"/>
        <end position="143"/>
    </location>
    <ligand>
        <name>FMN</name>
        <dbReference type="ChEBI" id="CHEBI:58210"/>
    </ligand>
</feature>
<protein>
    <recommendedName>
        <fullName evidence="1">FMN-dependent NADH:quinone oxidoreductase</fullName>
        <ecNumber evidence="1">1.6.5.-</ecNumber>
    </recommendedName>
    <alternativeName>
        <fullName evidence="1">Azo-dye reductase</fullName>
    </alternativeName>
    <alternativeName>
        <fullName evidence="1">FMN-dependent NADH-azo compound oxidoreductase</fullName>
    </alternativeName>
    <alternativeName>
        <fullName evidence="1">FMN-dependent NADH-azoreductase</fullName>
        <ecNumber evidence="1">1.7.1.17</ecNumber>
    </alternativeName>
</protein>
<sequence>MSKVLVLKSSILAGYSQSNQLSDYFVEQWREKHSADEITVRDLAANPIPVLDGELVGALRPSDAPLTPRQQEALALSDELIAELKAHDVIVIAAPMYNFNISTQLKNYFDLVARAGVTFRYTENGPEGLVTGKKAIVITSRGGIHKDGPTDLVTPYLSTFLGFIGITDVKFVFAEGIAYGPEMAAKAQSDAKAAIDSIVAA</sequence>
<name>AZOR_SHISS</name>
<proteinExistence type="inferred from homology"/>
<comment type="function">
    <text evidence="1">Quinone reductase that provides resistance to thiol-specific stress caused by electrophilic quinones.</text>
</comment>
<comment type="function">
    <text evidence="1">Also exhibits azoreductase activity. Catalyzes the reductive cleavage of the azo bond in aromatic azo compounds to the corresponding amines.</text>
</comment>
<comment type="catalytic activity">
    <reaction evidence="1">
        <text>2 a quinone + NADH + H(+) = 2 a 1,4-benzosemiquinone + NAD(+)</text>
        <dbReference type="Rhea" id="RHEA:65952"/>
        <dbReference type="ChEBI" id="CHEBI:15378"/>
        <dbReference type="ChEBI" id="CHEBI:57540"/>
        <dbReference type="ChEBI" id="CHEBI:57945"/>
        <dbReference type="ChEBI" id="CHEBI:132124"/>
        <dbReference type="ChEBI" id="CHEBI:134225"/>
    </reaction>
</comment>
<comment type="catalytic activity">
    <reaction evidence="1">
        <text>N,N-dimethyl-1,4-phenylenediamine + anthranilate + 2 NAD(+) = 2-(4-dimethylaminophenyl)diazenylbenzoate + 2 NADH + 2 H(+)</text>
        <dbReference type="Rhea" id="RHEA:55872"/>
        <dbReference type="ChEBI" id="CHEBI:15378"/>
        <dbReference type="ChEBI" id="CHEBI:15783"/>
        <dbReference type="ChEBI" id="CHEBI:16567"/>
        <dbReference type="ChEBI" id="CHEBI:57540"/>
        <dbReference type="ChEBI" id="CHEBI:57945"/>
        <dbReference type="ChEBI" id="CHEBI:71579"/>
        <dbReference type="EC" id="1.7.1.17"/>
    </reaction>
</comment>
<comment type="cofactor">
    <cofactor evidence="1">
        <name>FMN</name>
        <dbReference type="ChEBI" id="CHEBI:58210"/>
    </cofactor>
    <text evidence="1">Binds 1 FMN per subunit.</text>
</comment>
<comment type="subunit">
    <text evidence="1">Homodimer.</text>
</comment>
<comment type="similarity">
    <text evidence="1">Belongs to the azoreductase type 1 family.</text>
</comment>
<keyword id="KW-0285">Flavoprotein</keyword>
<keyword id="KW-0288">FMN</keyword>
<keyword id="KW-0520">NAD</keyword>
<keyword id="KW-0560">Oxidoreductase</keyword>
<keyword id="KW-1185">Reference proteome</keyword>
<gene>
    <name evidence="1" type="primary">azoR</name>
    <name type="ordered locus">SSON_1734</name>
</gene>
<dbReference type="EC" id="1.6.5.-" evidence="1"/>
<dbReference type="EC" id="1.7.1.17" evidence="1"/>
<dbReference type="EMBL" id="CP000038">
    <property type="protein sequence ID" value="AAZ88423.1"/>
    <property type="molecule type" value="Genomic_DNA"/>
</dbReference>
<dbReference type="RefSeq" id="WP_000048948.1">
    <property type="nucleotide sequence ID" value="NC_007384.1"/>
</dbReference>
<dbReference type="SMR" id="Q3Z1D9"/>
<dbReference type="GeneID" id="93775555"/>
<dbReference type="KEGG" id="ssn:SSON_1734"/>
<dbReference type="HOGENOM" id="CLU_088964_0_0_6"/>
<dbReference type="Proteomes" id="UP000002529">
    <property type="component" value="Chromosome"/>
</dbReference>
<dbReference type="GO" id="GO:0009055">
    <property type="term" value="F:electron transfer activity"/>
    <property type="evidence" value="ECO:0007669"/>
    <property type="project" value="UniProtKB-UniRule"/>
</dbReference>
<dbReference type="GO" id="GO:0010181">
    <property type="term" value="F:FMN binding"/>
    <property type="evidence" value="ECO:0007669"/>
    <property type="project" value="UniProtKB-UniRule"/>
</dbReference>
<dbReference type="GO" id="GO:0016652">
    <property type="term" value="F:oxidoreductase activity, acting on NAD(P)H as acceptor"/>
    <property type="evidence" value="ECO:0007669"/>
    <property type="project" value="UniProtKB-UniRule"/>
</dbReference>
<dbReference type="GO" id="GO:0016655">
    <property type="term" value="F:oxidoreductase activity, acting on NAD(P)H, quinone or similar compound as acceptor"/>
    <property type="evidence" value="ECO:0007669"/>
    <property type="project" value="InterPro"/>
</dbReference>
<dbReference type="FunFam" id="3.40.50.360:FF:000010">
    <property type="entry name" value="FMN-dependent NADH-azoreductase"/>
    <property type="match status" value="1"/>
</dbReference>
<dbReference type="Gene3D" id="3.40.50.360">
    <property type="match status" value="1"/>
</dbReference>
<dbReference type="HAMAP" id="MF_01216">
    <property type="entry name" value="Azoreductase_type1"/>
    <property type="match status" value="1"/>
</dbReference>
<dbReference type="InterPro" id="IPR003680">
    <property type="entry name" value="Flavodoxin_fold"/>
</dbReference>
<dbReference type="InterPro" id="IPR029039">
    <property type="entry name" value="Flavoprotein-like_sf"/>
</dbReference>
<dbReference type="InterPro" id="IPR050104">
    <property type="entry name" value="FMN-dep_NADH:Q_OxRdtase_AzoR1"/>
</dbReference>
<dbReference type="InterPro" id="IPR023048">
    <property type="entry name" value="NADH:quinone_OxRdtase_FMN_depd"/>
</dbReference>
<dbReference type="PANTHER" id="PTHR43741">
    <property type="entry name" value="FMN-DEPENDENT NADH-AZOREDUCTASE 1"/>
    <property type="match status" value="1"/>
</dbReference>
<dbReference type="PANTHER" id="PTHR43741:SF2">
    <property type="entry name" value="FMN-DEPENDENT NADH:QUINONE OXIDOREDUCTASE"/>
    <property type="match status" value="1"/>
</dbReference>
<dbReference type="Pfam" id="PF02525">
    <property type="entry name" value="Flavodoxin_2"/>
    <property type="match status" value="1"/>
</dbReference>
<dbReference type="SUPFAM" id="SSF52218">
    <property type="entry name" value="Flavoproteins"/>
    <property type="match status" value="1"/>
</dbReference>
<reference key="1">
    <citation type="journal article" date="2005" name="Nucleic Acids Res.">
        <title>Genome dynamics and diversity of Shigella species, the etiologic agents of bacillary dysentery.</title>
        <authorList>
            <person name="Yang F."/>
            <person name="Yang J."/>
            <person name="Zhang X."/>
            <person name="Chen L."/>
            <person name="Jiang Y."/>
            <person name="Yan Y."/>
            <person name="Tang X."/>
            <person name="Wang J."/>
            <person name="Xiong Z."/>
            <person name="Dong J."/>
            <person name="Xue Y."/>
            <person name="Zhu Y."/>
            <person name="Xu X."/>
            <person name="Sun L."/>
            <person name="Chen S."/>
            <person name="Nie H."/>
            <person name="Peng J."/>
            <person name="Xu J."/>
            <person name="Wang Y."/>
            <person name="Yuan Z."/>
            <person name="Wen Y."/>
            <person name="Yao Z."/>
            <person name="Shen Y."/>
            <person name="Qiang B."/>
            <person name="Hou Y."/>
            <person name="Yu J."/>
            <person name="Jin Q."/>
        </authorList>
    </citation>
    <scope>NUCLEOTIDE SEQUENCE [LARGE SCALE GENOMIC DNA]</scope>
    <source>
        <strain>Ss046</strain>
    </source>
</reference>
<evidence type="ECO:0000255" key="1">
    <source>
        <dbReference type="HAMAP-Rule" id="MF_01216"/>
    </source>
</evidence>